<feature type="chain" id="PRO_0000188613" description="Glycogen synthase">
    <location>
        <begin position="1"/>
        <end position="477"/>
    </location>
</feature>
<feature type="binding site" evidence="1">
    <location>
        <position position="15"/>
    </location>
    <ligand>
        <name>ADP-alpha-D-glucose</name>
        <dbReference type="ChEBI" id="CHEBI:57498"/>
    </ligand>
</feature>
<gene>
    <name type="primary">glgA</name>
    <name type="ordered locus">Z4791</name>
    <name type="ordered locus">ECs4274</name>
</gene>
<protein>
    <recommendedName>
        <fullName>Glycogen synthase</fullName>
        <ecNumber>2.4.1.21</ecNumber>
    </recommendedName>
    <alternativeName>
        <fullName>Starch [bacterial glycogen] synthase</fullName>
    </alternativeName>
</protein>
<evidence type="ECO:0000250" key="1"/>
<evidence type="ECO:0000305" key="2"/>
<accession>P0A6V0</accession>
<accession>P08323</accession>
<proteinExistence type="inferred from homology"/>
<name>GLGA_ECO57</name>
<reference key="1">
    <citation type="journal article" date="2001" name="Nature">
        <title>Genome sequence of enterohaemorrhagic Escherichia coli O157:H7.</title>
        <authorList>
            <person name="Perna N.T."/>
            <person name="Plunkett G. III"/>
            <person name="Burland V."/>
            <person name="Mau B."/>
            <person name="Glasner J.D."/>
            <person name="Rose D.J."/>
            <person name="Mayhew G.F."/>
            <person name="Evans P.S."/>
            <person name="Gregor J."/>
            <person name="Kirkpatrick H.A."/>
            <person name="Posfai G."/>
            <person name="Hackett J."/>
            <person name="Klink S."/>
            <person name="Boutin A."/>
            <person name="Shao Y."/>
            <person name="Miller L."/>
            <person name="Grotbeck E.J."/>
            <person name="Davis N.W."/>
            <person name="Lim A."/>
            <person name="Dimalanta E.T."/>
            <person name="Potamousis K."/>
            <person name="Apodaca J."/>
            <person name="Anantharaman T.S."/>
            <person name="Lin J."/>
            <person name="Yen G."/>
            <person name="Schwartz D.C."/>
            <person name="Welch R.A."/>
            <person name="Blattner F.R."/>
        </authorList>
    </citation>
    <scope>NUCLEOTIDE SEQUENCE [LARGE SCALE GENOMIC DNA]</scope>
    <source>
        <strain>O157:H7 / EDL933 / ATCC 700927 / EHEC</strain>
    </source>
</reference>
<reference key="2">
    <citation type="journal article" date="2001" name="DNA Res.">
        <title>Complete genome sequence of enterohemorrhagic Escherichia coli O157:H7 and genomic comparison with a laboratory strain K-12.</title>
        <authorList>
            <person name="Hayashi T."/>
            <person name="Makino K."/>
            <person name="Ohnishi M."/>
            <person name="Kurokawa K."/>
            <person name="Ishii K."/>
            <person name="Yokoyama K."/>
            <person name="Han C.-G."/>
            <person name="Ohtsubo E."/>
            <person name="Nakayama K."/>
            <person name="Murata T."/>
            <person name="Tanaka M."/>
            <person name="Tobe T."/>
            <person name="Iida T."/>
            <person name="Takami H."/>
            <person name="Honda T."/>
            <person name="Sasakawa C."/>
            <person name="Ogasawara N."/>
            <person name="Yasunaga T."/>
            <person name="Kuhara S."/>
            <person name="Shiba T."/>
            <person name="Hattori M."/>
            <person name="Shinagawa H."/>
        </authorList>
    </citation>
    <scope>NUCLEOTIDE SEQUENCE [LARGE SCALE GENOMIC DNA]</scope>
    <source>
        <strain>O157:H7 / Sakai / RIMD 0509952 / EHEC</strain>
    </source>
</reference>
<organism>
    <name type="scientific">Escherichia coli O157:H7</name>
    <dbReference type="NCBI Taxonomy" id="83334"/>
    <lineage>
        <taxon>Bacteria</taxon>
        <taxon>Pseudomonadati</taxon>
        <taxon>Pseudomonadota</taxon>
        <taxon>Gammaproteobacteria</taxon>
        <taxon>Enterobacterales</taxon>
        <taxon>Enterobacteriaceae</taxon>
        <taxon>Escherichia</taxon>
    </lineage>
</organism>
<keyword id="KW-0320">Glycogen biosynthesis</keyword>
<keyword id="KW-0328">Glycosyltransferase</keyword>
<keyword id="KW-1185">Reference proteome</keyword>
<keyword id="KW-0808">Transferase</keyword>
<comment type="function">
    <text evidence="1">Synthesizes alpha-1,4-glucan chains using ADP-glucose.</text>
</comment>
<comment type="catalytic activity">
    <reaction>
        <text>[(1-&gt;4)-alpha-D-glucosyl](n) + ADP-alpha-D-glucose = [(1-&gt;4)-alpha-D-glucosyl](n+1) + ADP + H(+)</text>
        <dbReference type="Rhea" id="RHEA:18189"/>
        <dbReference type="Rhea" id="RHEA-COMP:9584"/>
        <dbReference type="Rhea" id="RHEA-COMP:9587"/>
        <dbReference type="ChEBI" id="CHEBI:15378"/>
        <dbReference type="ChEBI" id="CHEBI:15444"/>
        <dbReference type="ChEBI" id="CHEBI:57498"/>
        <dbReference type="ChEBI" id="CHEBI:456216"/>
        <dbReference type="EC" id="2.4.1.21"/>
    </reaction>
</comment>
<comment type="pathway">
    <text>Glycan biosynthesis; glycogen biosynthesis.</text>
</comment>
<comment type="similarity">
    <text evidence="2">Belongs to the glycosyltransferase 1 family. Bacterial/plant glycogen synthase subfamily.</text>
</comment>
<dbReference type="EC" id="2.4.1.21"/>
<dbReference type="EMBL" id="AE005174">
    <property type="protein sequence ID" value="AAG58535.1"/>
    <property type="molecule type" value="Genomic_DNA"/>
</dbReference>
<dbReference type="EMBL" id="BA000007">
    <property type="protein sequence ID" value="BAB37697.1"/>
    <property type="molecule type" value="Genomic_DNA"/>
</dbReference>
<dbReference type="PIR" id="B98163">
    <property type="entry name" value="B98163"/>
</dbReference>
<dbReference type="PIR" id="C86009">
    <property type="entry name" value="C86009"/>
</dbReference>
<dbReference type="RefSeq" id="NP_312301.1">
    <property type="nucleotide sequence ID" value="NC_002695.1"/>
</dbReference>
<dbReference type="RefSeq" id="WP_001197646.1">
    <property type="nucleotide sequence ID" value="NZ_VOAI01000004.1"/>
</dbReference>
<dbReference type="SMR" id="P0A6V0"/>
<dbReference type="STRING" id="155864.Z4791"/>
<dbReference type="GeneID" id="75202274"/>
<dbReference type="GeneID" id="915868"/>
<dbReference type="KEGG" id="ece:Z4791"/>
<dbReference type="KEGG" id="ecs:ECs_4274"/>
<dbReference type="PATRIC" id="fig|386585.9.peg.4465"/>
<dbReference type="eggNOG" id="COG0297">
    <property type="taxonomic scope" value="Bacteria"/>
</dbReference>
<dbReference type="HOGENOM" id="CLU_009583_18_2_6"/>
<dbReference type="OMA" id="TWCPWYM"/>
<dbReference type="UniPathway" id="UPA00164"/>
<dbReference type="Proteomes" id="UP000000558">
    <property type="component" value="Chromosome"/>
</dbReference>
<dbReference type="Proteomes" id="UP000002519">
    <property type="component" value="Chromosome"/>
</dbReference>
<dbReference type="GO" id="GO:0005829">
    <property type="term" value="C:cytosol"/>
    <property type="evidence" value="ECO:0007669"/>
    <property type="project" value="TreeGrafter"/>
</dbReference>
<dbReference type="GO" id="GO:0009011">
    <property type="term" value="F:alpha-1,4-glucan glucosyltransferase (ADP-glucose donor) activity"/>
    <property type="evidence" value="ECO:0007669"/>
    <property type="project" value="UniProtKB-UniRule"/>
</dbReference>
<dbReference type="GO" id="GO:0004373">
    <property type="term" value="F:alpha-1,4-glucan glucosyltransferase (UDP-glucose donor) activity"/>
    <property type="evidence" value="ECO:0007669"/>
    <property type="project" value="InterPro"/>
</dbReference>
<dbReference type="GO" id="GO:0005978">
    <property type="term" value="P:glycogen biosynthetic process"/>
    <property type="evidence" value="ECO:0007669"/>
    <property type="project" value="UniProtKB-UniRule"/>
</dbReference>
<dbReference type="CDD" id="cd03791">
    <property type="entry name" value="GT5_Glycogen_synthase_DULL1-like"/>
    <property type="match status" value="1"/>
</dbReference>
<dbReference type="FunFam" id="3.40.50.2000:FF:000008">
    <property type="entry name" value="Glycogen synthase"/>
    <property type="match status" value="1"/>
</dbReference>
<dbReference type="FunFam" id="3.40.50.2000:FF:000011">
    <property type="entry name" value="Glycogen synthase"/>
    <property type="match status" value="1"/>
</dbReference>
<dbReference type="Gene3D" id="3.40.50.2000">
    <property type="entry name" value="Glycogen Phosphorylase B"/>
    <property type="match status" value="2"/>
</dbReference>
<dbReference type="HAMAP" id="MF_00484">
    <property type="entry name" value="Glycogen_synth"/>
    <property type="match status" value="1"/>
</dbReference>
<dbReference type="InterPro" id="IPR001296">
    <property type="entry name" value="Glyco_trans_1"/>
</dbReference>
<dbReference type="InterPro" id="IPR011835">
    <property type="entry name" value="GS/SS"/>
</dbReference>
<dbReference type="InterPro" id="IPR013534">
    <property type="entry name" value="Starch_synth_cat_dom"/>
</dbReference>
<dbReference type="NCBIfam" id="TIGR02095">
    <property type="entry name" value="glgA"/>
    <property type="match status" value="1"/>
</dbReference>
<dbReference type="NCBIfam" id="NF001899">
    <property type="entry name" value="PRK00654.1-2"/>
    <property type="match status" value="1"/>
</dbReference>
<dbReference type="PANTHER" id="PTHR45825:SF11">
    <property type="entry name" value="ALPHA AMYLASE DOMAIN-CONTAINING PROTEIN"/>
    <property type="match status" value="1"/>
</dbReference>
<dbReference type="PANTHER" id="PTHR45825">
    <property type="entry name" value="GRANULE-BOUND STARCH SYNTHASE 1, CHLOROPLASTIC/AMYLOPLASTIC"/>
    <property type="match status" value="1"/>
</dbReference>
<dbReference type="Pfam" id="PF08323">
    <property type="entry name" value="Glyco_transf_5"/>
    <property type="match status" value="1"/>
</dbReference>
<dbReference type="Pfam" id="PF00534">
    <property type="entry name" value="Glycos_transf_1"/>
    <property type="match status" value="1"/>
</dbReference>
<dbReference type="SUPFAM" id="SSF53756">
    <property type="entry name" value="UDP-Glycosyltransferase/glycogen phosphorylase"/>
    <property type="match status" value="1"/>
</dbReference>
<sequence>MQVLHVCSEMFPLLKTGGLADVIGALPAAQIADGVDARVLLPAFPDIRRGVTDAQVVSRRDTFAGHITLLFGHYNGVGIYLIDAPHLYDRPGSPYHDTNLFAYTDNVLRFALLGWVGAEMASGLDPFWRPDVVHAHDWHAGLAPAYLAARGRPAKSVFTVHNLAYQGMFYAHHMNDIQLPWSFFNIHGLEFNGQISFLKAGLYYADHITAVSPTYAREITEPQFAYGMEGLLQQRHREGRLSGVLNGVDEKIWSPETDLLLASRYTRDTLEDKAENKRQLQIAMGLKVDDKVPLFAVVSRLTSQKGLDLVLEALPGLLEQGGQLALLGAGDPVLQEGFLAAAAEYPGQVGVQIGYHEAFSHRIMGGADVILVPSRFEPCGLTQLYGLKYGTLPLVRRTGGLADTVSDCSLENLADGVASGFVFEDSNAWSLLRAIRRAFVLWSRPSLWRFVQRQAMAMDFSWQVAAKSYRELYYRLK</sequence>